<organism>
    <name type="scientific">Salmonella newport (strain SL254)</name>
    <dbReference type="NCBI Taxonomy" id="423368"/>
    <lineage>
        <taxon>Bacteria</taxon>
        <taxon>Pseudomonadati</taxon>
        <taxon>Pseudomonadota</taxon>
        <taxon>Gammaproteobacteria</taxon>
        <taxon>Enterobacterales</taxon>
        <taxon>Enterobacteriaceae</taxon>
        <taxon>Salmonella</taxon>
    </lineage>
</organism>
<dbReference type="EC" id="6.3.4.2" evidence="1"/>
<dbReference type="EMBL" id="CP001113">
    <property type="protein sequence ID" value="ACF61825.1"/>
    <property type="molecule type" value="Genomic_DNA"/>
</dbReference>
<dbReference type="RefSeq" id="WP_000210858.1">
    <property type="nucleotide sequence ID" value="NC_011080.1"/>
</dbReference>
<dbReference type="SMR" id="B4T484"/>
<dbReference type="MEROPS" id="C26.964"/>
<dbReference type="KEGG" id="see:SNSL254_A3169"/>
<dbReference type="HOGENOM" id="CLU_011675_5_0_6"/>
<dbReference type="UniPathway" id="UPA00159">
    <property type="reaction ID" value="UER00277"/>
</dbReference>
<dbReference type="Proteomes" id="UP000008824">
    <property type="component" value="Chromosome"/>
</dbReference>
<dbReference type="GO" id="GO:0005829">
    <property type="term" value="C:cytosol"/>
    <property type="evidence" value="ECO:0007669"/>
    <property type="project" value="TreeGrafter"/>
</dbReference>
<dbReference type="GO" id="GO:0005524">
    <property type="term" value="F:ATP binding"/>
    <property type="evidence" value="ECO:0007669"/>
    <property type="project" value="UniProtKB-KW"/>
</dbReference>
<dbReference type="GO" id="GO:0003883">
    <property type="term" value="F:CTP synthase activity"/>
    <property type="evidence" value="ECO:0007669"/>
    <property type="project" value="UniProtKB-UniRule"/>
</dbReference>
<dbReference type="GO" id="GO:0004359">
    <property type="term" value="F:glutaminase activity"/>
    <property type="evidence" value="ECO:0007669"/>
    <property type="project" value="RHEA"/>
</dbReference>
<dbReference type="GO" id="GO:0042802">
    <property type="term" value="F:identical protein binding"/>
    <property type="evidence" value="ECO:0007669"/>
    <property type="project" value="TreeGrafter"/>
</dbReference>
<dbReference type="GO" id="GO:0046872">
    <property type="term" value="F:metal ion binding"/>
    <property type="evidence" value="ECO:0007669"/>
    <property type="project" value="UniProtKB-KW"/>
</dbReference>
<dbReference type="GO" id="GO:0044210">
    <property type="term" value="P:'de novo' CTP biosynthetic process"/>
    <property type="evidence" value="ECO:0007669"/>
    <property type="project" value="UniProtKB-UniRule"/>
</dbReference>
<dbReference type="GO" id="GO:0019856">
    <property type="term" value="P:pyrimidine nucleobase biosynthetic process"/>
    <property type="evidence" value="ECO:0007669"/>
    <property type="project" value="TreeGrafter"/>
</dbReference>
<dbReference type="CDD" id="cd03113">
    <property type="entry name" value="CTPS_N"/>
    <property type="match status" value="1"/>
</dbReference>
<dbReference type="CDD" id="cd01746">
    <property type="entry name" value="GATase1_CTP_Synthase"/>
    <property type="match status" value="1"/>
</dbReference>
<dbReference type="FunFam" id="3.40.50.300:FF:000009">
    <property type="entry name" value="CTP synthase"/>
    <property type="match status" value="1"/>
</dbReference>
<dbReference type="FunFam" id="3.40.50.880:FF:000002">
    <property type="entry name" value="CTP synthase"/>
    <property type="match status" value="1"/>
</dbReference>
<dbReference type="Gene3D" id="3.40.50.880">
    <property type="match status" value="1"/>
</dbReference>
<dbReference type="Gene3D" id="3.40.50.300">
    <property type="entry name" value="P-loop containing nucleotide triphosphate hydrolases"/>
    <property type="match status" value="1"/>
</dbReference>
<dbReference type="HAMAP" id="MF_01227">
    <property type="entry name" value="PyrG"/>
    <property type="match status" value="1"/>
</dbReference>
<dbReference type="InterPro" id="IPR029062">
    <property type="entry name" value="Class_I_gatase-like"/>
</dbReference>
<dbReference type="InterPro" id="IPR004468">
    <property type="entry name" value="CTP_synthase"/>
</dbReference>
<dbReference type="InterPro" id="IPR017456">
    <property type="entry name" value="CTP_synthase_N"/>
</dbReference>
<dbReference type="InterPro" id="IPR017926">
    <property type="entry name" value="GATASE"/>
</dbReference>
<dbReference type="InterPro" id="IPR033828">
    <property type="entry name" value="GATase1_CTP_Synthase"/>
</dbReference>
<dbReference type="InterPro" id="IPR027417">
    <property type="entry name" value="P-loop_NTPase"/>
</dbReference>
<dbReference type="NCBIfam" id="NF003792">
    <property type="entry name" value="PRK05380.1"/>
    <property type="match status" value="1"/>
</dbReference>
<dbReference type="NCBIfam" id="TIGR00337">
    <property type="entry name" value="PyrG"/>
    <property type="match status" value="1"/>
</dbReference>
<dbReference type="PANTHER" id="PTHR11550">
    <property type="entry name" value="CTP SYNTHASE"/>
    <property type="match status" value="1"/>
</dbReference>
<dbReference type="PANTHER" id="PTHR11550:SF0">
    <property type="entry name" value="CTP SYNTHASE-RELATED"/>
    <property type="match status" value="1"/>
</dbReference>
<dbReference type="Pfam" id="PF06418">
    <property type="entry name" value="CTP_synth_N"/>
    <property type="match status" value="1"/>
</dbReference>
<dbReference type="Pfam" id="PF00117">
    <property type="entry name" value="GATase"/>
    <property type="match status" value="1"/>
</dbReference>
<dbReference type="SUPFAM" id="SSF52317">
    <property type="entry name" value="Class I glutamine amidotransferase-like"/>
    <property type="match status" value="1"/>
</dbReference>
<dbReference type="SUPFAM" id="SSF52540">
    <property type="entry name" value="P-loop containing nucleoside triphosphate hydrolases"/>
    <property type="match status" value="1"/>
</dbReference>
<dbReference type="PROSITE" id="PS51273">
    <property type="entry name" value="GATASE_TYPE_1"/>
    <property type="match status" value="1"/>
</dbReference>
<name>PYRG_SALNS</name>
<gene>
    <name evidence="1" type="primary">pyrG</name>
    <name type="ordered locus">SNSL254_A3169</name>
</gene>
<feature type="chain" id="PRO_1000139562" description="CTP synthase">
    <location>
        <begin position="1"/>
        <end position="545"/>
    </location>
</feature>
<feature type="domain" description="Glutamine amidotransferase type-1" evidence="1">
    <location>
        <begin position="291"/>
        <end position="542"/>
    </location>
</feature>
<feature type="region of interest" description="Amidoligase domain" evidence="1">
    <location>
        <begin position="1"/>
        <end position="266"/>
    </location>
</feature>
<feature type="active site" description="Nucleophile; for glutamine hydrolysis" evidence="1">
    <location>
        <position position="379"/>
    </location>
</feature>
<feature type="active site" evidence="1">
    <location>
        <position position="515"/>
    </location>
</feature>
<feature type="active site" evidence="1">
    <location>
        <position position="517"/>
    </location>
</feature>
<feature type="binding site" evidence="1">
    <location>
        <position position="14"/>
    </location>
    <ligand>
        <name>CTP</name>
        <dbReference type="ChEBI" id="CHEBI:37563"/>
        <note>allosteric inhibitor</note>
    </ligand>
</feature>
<feature type="binding site" evidence="1">
    <location>
        <position position="14"/>
    </location>
    <ligand>
        <name>UTP</name>
        <dbReference type="ChEBI" id="CHEBI:46398"/>
    </ligand>
</feature>
<feature type="binding site" evidence="1">
    <location>
        <begin position="15"/>
        <end position="20"/>
    </location>
    <ligand>
        <name>ATP</name>
        <dbReference type="ChEBI" id="CHEBI:30616"/>
    </ligand>
</feature>
<feature type="binding site" evidence="1">
    <location>
        <position position="72"/>
    </location>
    <ligand>
        <name>ATP</name>
        <dbReference type="ChEBI" id="CHEBI:30616"/>
    </ligand>
</feature>
<feature type="binding site" evidence="1">
    <location>
        <position position="72"/>
    </location>
    <ligand>
        <name>Mg(2+)</name>
        <dbReference type="ChEBI" id="CHEBI:18420"/>
    </ligand>
</feature>
<feature type="binding site" evidence="1">
    <location>
        <position position="140"/>
    </location>
    <ligand>
        <name>Mg(2+)</name>
        <dbReference type="ChEBI" id="CHEBI:18420"/>
    </ligand>
</feature>
<feature type="binding site" evidence="1">
    <location>
        <begin position="147"/>
        <end position="149"/>
    </location>
    <ligand>
        <name>CTP</name>
        <dbReference type="ChEBI" id="CHEBI:37563"/>
        <note>allosteric inhibitor</note>
    </ligand>
</feature>
<feature type="binding site" evidence="1">
    <location>
        <begin position="187"/>
        <end position="192"/>
    </location>
    <ligand>
        <name>CTP</name>
        <dbReference type="ChEBI" id="CHEBI:37563"/>
        <note>allosteric inhibitor</note>
    </ligand>
</feature>
<feature type="binding site" evidence="1">
    <location>
        <begin position="187"/>
        <end position="192"/>
    </location>
    <ligand>
        <name>UTP</name>
        <dbReference type="ChEBI" id="CHEBI:46398"/>
    </ligand>
</feature>
<feature type="binding site" evidence="1">
    <location>
        <position position="223"/>
    </location>
    <ligand>
        <name>CTP</name>
        <dbReference type="ChEBI" id="CHEBI:37563"/>
        <note>allosteric inhibitor</note>
    </ligand>
</feature>
<feature type="binding site" evidence="1">
    <location>
        <position position="223"/>
    </location>
    <ligand>
        <name>UTP</name>
        <dbReference type="ChEBI" id="CHEBI:46398"/>
    </ligand>
</feature>
<feature type="binding site" evidence="1">
    <location>
        <begin position="239"/>
        <end position="241"/>
    </location>
    <ligand>
        <name>ATP</name>
        <dbReference type="ChEBI" id="CHEBI:30616"/>
    </ligand>
</feature>
<feature type="binding site" evidence="1">
    <location>
        <position position="352"/>
    </location>
    <ligand>
        <name>L-glutamine</name>
        <dbReference type="ChEBI" id="CHEBI:58359"/>
    </ligand>
</feature>
<feature type="binding site" evidence="1">
    <location>
        <begin position="380"/>
        <end position="383"/>
    </location>
    <ligand>
        <name>L-glutamine</name>
        <dbReference type="ChEBI" id="CHEBI:58359"/>
    </ligand>
</feature>
<feature type="binding site" evidence="1">
    <location>
        <position position="403"/>
    </location>
    <ligand>
        <name>L-glutamine</name>
        <dbReference type="ChEBI" id="CHEBI:58359"/>
    </ligand>
</feature>
<feature type="binding site" evidence="1">
    <location>
        <position position="470"/>
    </location>
    <ligand>
        <name>L-glutamine</name>
        <dbReference type="ChEBI" id="CHEBI:58359"/>
    </ligand>
</feature>
<accession>B4T484</accession>
<evidence type="ECO:0000255" key="1">
    <source>
        <dbReference type="HAMAP-Rule" id="MF_01227"/>
    </source>
</evidence>
<proteinExistence type="inferred from homology"/>
<keyword id="KW-0067">ATP-binding</keyword>
<keyword id="KW-0315">Glutamine amidotransferase</keyword>
<keyword id="KW-0436">Ligase</keyword>
<keyword id="KW-0460">Magnesium</keyword>
<keyword id="KW-0479">Metal-binding</keyword>
<keyword id="KW-0547">Nucleotide-binding</keyword>
<keyword id="KW-0665">Pyrimidine biosynthesis</keyword>
<protein>
    <recommendedName>
        <fullName evidence="1">CTP synthase</fullName>
        <ecNumber evidence="1">6.3.4.2</ecNumber>
    </recommendedName>
    <alternativeName>
        <fullName evidence="1">Cytidine 5'-triphosphate synthase</fullName>
    </alternativeName>
    <alternativeName>
        <fullName evidence="1">Cytidine triphosphate synthetase</fullName>
        <shortName evidence="1">CTP synthetase</shortName>
        <shortName evidence="1">CTPS</shortName>
    </alternativeName>
    <alternativeName>
        <fullName evidence="1">UTP--ammonia ligase</fullName>
    </alternativeName>
</protein>
<comment type="function">
    <text evidence="1">Catalyzes the ATP-dependent amination of UTP to CTP with either L-glutamine or ammonia as the source of nitrogen. Regulates intracellular CTP levels through interactions with the four ribonucleotide triphosphates.</text>
</comment>
<comment type="catalytic activity">
    <reaction evidence="1">
        <text>UTP + L-glutamine + ATP + H2O = CTP + L-glutamate + ADP + phosphate + 2 H(+)</text>
        <dbReference type="Rhea" id="RHEA:26426"/>
        <dbReference type="ChEBI" id="CHEBI:15377"/>
        <dbReference type="ChEBI" id="CHEBI:15378"/>
        <dbReference type="ChEBI" id="CHEBI:29985"/>
        <dbReference type="ChEBI" id="CHEBI:30616"/>
        <dbReference type="ChEBI" id="CHEBI:37563"/>
        <dbReference type="ChEBI" id="CHEBI:43474"/>
        <dbReference type="ChEBI" id="CHEBI:46398"/>
        <dbReference type="ChEBI" id="CHEBI:58359"/>
        <dbReference type="ChEBI" id="CHEBI:456216"/>
        <dbReference type="EC" id="6.3.4.2"/>
    </reaction>
</comment>
<comment type="catalytic activity">
    <reaction evidence="1">
        <text>L-glutamine + H2O = L-glutamate + NH4(+)</text>
        <dbReference type="Rhea" id="RHEA:15889"/>
        <dbReference type="ChEBI" id="CHEBI:15377"/>
        <dbReference type="ChEBI" id="CHEBI:28938"/>
        <dbReference type="ChEBI" id="CHEBI:29985"/>
        <dbReference type="ChEBI" id="CHEBI:58359"/>
    </reaction>
</comment>
<comment type="catalytic activity">
    <reaction evidence="1">
        <text>UTP + NH4(+) + ATP = CTP + ADP + phosphate + 2 H(+)</text>
        <dbReference type="Rhea" id="RHEA:16597"/>
        <dbReference type="ChEBI" id="CHEBI:15378"/>
        <dbReference type="ChEBI" id="CHEBI:28938"/>
        <dbReference type="ChEBI" id="CHEBI:30616"/>
        <dbReference type="ChEBI" id="CHEBI:37563"/>
        <dbReference type="ChEBI" id="CHEBI:43474"/>
        <dbReference type="ChEBI" id="CHEBI:46398"/>
        <dbReference type="ChEBI" id="CHEBI:456216"/>
    </reaction>
</comment>
<comment type="activity regulation">
    <text evidence="1">Allosterically activated by GTP, when glutamine is the substrate; GTP has no effect on the reaction when ammonia is the substrate. The allosteric effector GTP functions by stabilizing the protein conformation that binds the tetrahedral intermediate(s) formed during glutamine hydrolysis. Inhibited by the product CTP, via allosteric rather than competitive inhibition.</text>
</comment>
<comment type="pathway">
    <text evidence="1">Pyrimidine metabolism; CTP biosynthesis via de novo pathway; CTP from UDP: step 2/2.</text>
</comment>
<comment type="subunit">
    <text evidence="1">Homotetramer.</text>
</comment>
<comment type="miscellaneous">
    <text evidence="1">CTPSs have evolved a hybrid strategy for distinguishing between UTP and CTP. The overlapping regions of the product feedback inhibitory and substrate sites recognize a common feature in both compounds, the triphosphate moiety. To differentiate isosteric substrate and product pyrimidine rings, an additional pocket far from the expected kinase/ligase catalytic site, specifically recognizes the cytosine and ribose portions of the product inhibitor.</text>
</comment>
<comment type="similarity">
    <text evidence="1">Belongs to the CTP synthase family.</text>
</comment>
<reference key="1">
    <citation type="journal article" date="2011" name="J. Bacteriol.">
        <title>Comparative genomics of 28 Salmonella enterica isolates: evidence for CRISPR-mediated adaptive sublineage evolution.</title>
        <authorList>
            <person name="Fricke W.F."/>
            <person name="Mammel M.K."/>
            <person name="McDermott P.F."/>
            <person name="Tartera C."/>
            <person name="White D.G."/>
            <person name="Leclerc J.E."/>
            <person name="Ravel J."/>
            <person name="Cebula T.A."/>
        </authorList>
    </citation>
    <scope>NUCLEOTIDE SEQUENCE [LARGE SCALE GENOMIC DNA]</scope>
    <source>
        <strain>SL254</strain>
    </source>
</reference>
<sequence length="545" mass="60105">MTTNYIFVTGGVVSSLGKGIAAASLAAILEARGLNVTIMKLDPYINVDPGTMSPIQHGEVFVTEDGAETDLDLGHYERFIRTKMSRRNNFTTGRIYSDVLRKERRGDYLGATVQVIPHITNAIKERVLEGGEGHDVVLVEIGGTVGDIESLPFLEAIRQLAVDIGREHALFMHLTLVPYLAAAGEVKTKPTQHSVKELLSIGIQPDILICRSDRAVPANERAKIALFCNVPEKAVISMKDVDSIYKIPGLLKSQGLDDYICKRFSLNCPEANLSEWEQVIYEEANPAGEVTIGMVGKYIELPDAYKSVIEALKHGGLKNRVTVNIKLIDSQDVETRGVEILKDLDAILIPGGFGYRGVEGKIATARYARENNIPYLGICLGMQVALIEFARNVAGMDNANSTEFVPDCKYPVVALITEWRDEDGNVEVRNEKSDLGGTMRLGAQQCQLSDDSLVRQLYGASTIVERHRHRYEVNNMLLKQIEAAGLRVAGRSGDAQLVEIIEVPNHPWFVACQFHPEFTSTPRDGHPLFAGFVKAANEHQKRQAK</sequence>